<feature type="chain" id="PRO_0000364361" description="S-adenosylmethionine decarboxylase beta chain" evidence="1">
    <location>
        <begin position="1"/>
        <end position="120"/>
    </location>
</feature>
<feature type="chain" id="PRO_0000364362" description="S-adenosylmethionine decarboxylase alpha chain" evidence="1">
    <location>
        <begin position="121"/>
        <end position="271"/>
    </location>
</feature>
<feature type="active site" description="Schiff-base intermediate with substrate; via pyruvic acid" evidence="1">
    <location>
        <position position="121"/>
    </location>
</feature>
<feature type="active site" description="Proton acceptor; for processing activity" evidence="1">
    <location>
        <position position="126"/>
    </location>
</feature>
<feature type="active site" description="Proton donor; for catalytic activity" evidence="1">
    <location>
        <position position="149"/>
    </location>
</feature>
<feature type="site" description="Cleavage (non-hydrolytic); by autolysis" evidence="1">
    <location>
        <begin position="120"/>
        <end position="121"/>
    </location>
</feature>
<feature type="modified residue" description="Pyruvic acid (Ser); by autocatalysis" evidence="1">
    <location>
        <position position="121"/>
    </location>
</feature>
<reference key="1">
    <citation type="submission" date="2007-06" db="EMBL/GenBank/DDBJ databases">
        <title>Complete sequence of Clostridium beijerinckii NCIMB 8052.</title>
        <authorList>
            <consortium name="US DOE Joint Genome Institute"/>
            <person name="Copeland A."/>
            <person name="Lucas S."/>
            <person name="Lapidus A."/>
            <person name="Barry K."/>
            <person name="Detter J.C."/>
            <person name="Glavina del Rio T."/>
            <person name="Hammon N."/>
            <person name="Israni S."/>
            <person name="Dalin E."/>
            <person name="Tice H."/>
            <person name="Pitluck S."/>
            <person name="Sims D."/>
            <person name="Brettin T."/>
            <person name="Bruce D."/>
            <person name="Tapia R."/>
            <person name="Brainard J."/>
            <person name="Schmutz J."/>
            <person name="Larimer F."/>
            <person name="Land M."/>
            <person name="Hauser L."/>
            <person name="Kyrpides N."/>
            <person name="Mikhailova N."/>
            <person name="Bennet G."/>
            <person name="Cann I."/>
            <person name="Chen J.-S."/>
            <person name="Contreras A.L."/>
            <person name="Jones D."/>
            <person name="Kashket E."/>
            <person name="Mitchell W."/>
            <person name="Stoddard S."/>
            <person name="Schwarz W."/>
            <person name="Qureshi N."/>
            <person name="Young M."/>
            <person name="Shi Z."/>
            <person name="Ezeji T."/>
            <person name="White B."/>
            <person name="Blaschek H."/>
            <person name="Richardson P."/>
        </authorList>
    </citation>
    <scope>NUCLEOTIDE SEQUENCE [LARGE SCALE GENOMIC DNA]</scope>
    <source>
        <strain>ATCC 51743 / NCIMB 8052</strain>
    </source>
</reference>
<accession>A6M1P1</accession>
<name>SPED_CLOB8</name>
<evidence type="ECO:0000255" key="1">
    <source>
        <dbReference type="HAMAP-Rule" id="MF_00465"/>
    </source>
</evidence>
<keyword id="KW-0068">Autocatalytic cleavage</keyword>
<keyword id="KW-0210">Decarboxylase</keyword>
<keyword id="KW-0456">Lyase</keyword>
<keyword id="KW-0620">Polyamine biosynthesis</keyword>
<keyword id="KW-0670">Pyruvate</keyword>
<keyword id="KW-0949">S-adenosyl-L-methionine</keyword>
<keyword id="KW-0704">Schiff base</keyword>
<keyword id="KW-0745">Spermidine biosynthesis</keyword>
<keyword id="KW-0865">Zymogen</keyword>
<organism>
    <name type="scientific">Clostridium beijerinckii (strain ATCC 51743 / NCIMB 8052)</name>
    <name type="common">Clostridium acetobutylicum</name>
    <dbReference type="NCBI Taxonomy" id="290402"/>
    <lineage>
        <taxon>Bacteria</taxon>
        <taxon>Bacillati</taxon>
        <taxon>Bacillota</taxon>
        <taxon>Clostridia</taxon>
        <taxon>Eubacteriales</taxon>
        <taxon>Clostridiaceae</taxon>
        <taxon>Clostridium</taxon>
    </lineage>
</organism>
<proteinExistence type="inferred from homology"/>
<comment type="function">
    <text evidence="1">Catalyzes the decarboxylation of S-adenosylmethionine to S-adenosylmethioninamine (dcAdoMet), the propylamine donor required for the synthesis of the polyamines spermine and spermidine from the diamine putrescine.</text>
</comment>
<comment type="catalytic activity">
    <reaction evidence="1">
        <text>S-adenosyl-L-methionine + H(+) = S-adenosyl 3-(methylsulfanyl)propylamine + CO2</text>
        <dbReference type="Rhea" id="RHEA:15981"/>
        <dbReference type="ChEBI" id="CHEBI:15378"/>
        <dbReference type="ChEBI" id="CHEBI:16526"/>
        <dbReference type="ChEBI" id="CHEBI:57443"/>
        <dbReference type="ChEBI" id="CHEBI:59789"/>
        <dbReference type="EC" id="4.1.1.50"/>
    </reaction>
</comment>
<comment type="cofactor">
    <cofactor evidence="1">
        <name>pyruvate</name>
        <dbReference type="ChEBI" id="CHEBI:15361"/>
    </cofactor>
    <text evidence="1">Binds 1 pyruvoyl group covalently per subunit.</text>
</comment>
<comment type="pathway">
    <text evidence="1">Amine and polyamine biosynthesis; S-adenosylmethioninamine biosynthesis; S-adenosylmethioninamine from S-adenosyl-L-methionine: step 1/1.</text>
</comment>
<comment type="subunit">
    <text evidence="1">Heterooctamer of four alpha and four beta chains arranged as a tetramer of alpha/beta heterodimers.</text>
</comment>
<comment type="PTM">
    <text evidence="1">Is synthesized initially as an inactive proenzyme. Formation of the active enzyme involves a self-maturation process in which the active site pyruvoyl group is generated from an internal serine residue via an autocatalytic post-translational modification. Two non-identical subunits are generated from the proenzyme in this reaction, and the pyruvate is formed at the N-terminus of the alpha chain, which is derived from the carboxyl end of the proenzyme. The post-translation cleavage follows an unusual pathway, termed non-hydrolytic serinolysis, in which the side chain hydroxyl group of the serine supplies its oxygen atom to form the C-terminus of the beta chain, while the remainder of the serine residue undergoes an oxidative deamination to produce ammonia and the pyruvoyl group blocking the N-terminus of the alpha chain.</text>
</comment>
<comment type="similarity">
    <text evidence="1">Belongs to the prokaryotic AdoMetDC family. Type 2 subfamily.</text>
</comment>
<protein>
    <recommendedName>
        <fullName evidence="1">S-adenosylmethionine decarboxylase proenzyme</fullName>
        <shortName evidence="1">AdoMetDC</shortName>
        <shortName evidence="1">SAMDC</shortName>
        <ecNumber evidence="1">4.1.1.50</ecNumber>
    </recommendedName>
    <component>
        <recommendedName>
            <fullName evidence="1">S-adenosylmethionine decarboxylase beta chain</fullName>
        </recommendedName>
    </component>
    <component>
        <recommendedName>
            <fullName evidence="1">S-adenosylmethionine decarboxylase alpha chain</fullName>
        </recommendedName>
    </component>
</protein>
<gene>
    <name evidence="1" type="primary">speD</name>
    <name type="ordered locus">Cbei_4412</name>
</gene>
<sequence>MLGLENKLKLYGFNNLTKTLSFNIYDVCYAKSEREQKDYIAYIDEQYNSERLTRILCDVTESIGAHVLNISKQDYDPQGASVTILVSEQTLAVKEIDASCNKGEIDILKTRDTVVGHLDKSHVTVHTYPEYHPDNSIATFRVDIDVATCGEVSPLNALNYLIGSFDSDIITIDYRVRGFTRDVDGKKLFIDHKITSIQDYIDENTLKRYDAMDINVYQSNIFHTKMLIKEIELQNYLFNRDVYEIKPKQRLEIENNLRREMIEIFSGTNIY</sequence>
<dbReference type="EC" id="4.1.1.50" evidence="1"/>
<dbReference type="EMBL" id="CP000721">
    <property type="protein sequence ID" value="ABR36521.1"/>
    <property type="molecule type" value="Genomic_DNA"/>
</dbReference>
<dbReference type="KEGG" id="cbe:Cbei_4412"/>
<dbReference type="eggNOG" id="COG1586">
    <property type="taxonomic scope" value="Bacteria"/>
</dbReference>
<dbReference type="HOGENOM" id="CLU_092007_0_0_9"/>
<dbReference type="UniPathway" id="UPA00331">
    <property type="reaction ID" value="UER00451"/>
</dbReference>
<dbReference type="Proteomes" id="UP000000565">
    <property type="component" value="Chromosome"/>
</dbReference>
<dbReference type="GO" id="GO:0005829">
    <property type="term" value="C:cytosol"/>
    <property type="evidence" value="ECO:0007669"/>
    <property type="project" value="TreeGrafter"/>
</dbReference>
<dbReference type="GO" id="GO:0004014">
    <property type="term" value="F:adenosylmethionine decarboxylase activity"/>
    <property type="evidence" value="ECO:0007669"/>
    <property type="project" value="UniProtKB-UniRule"/>
</dbReference>
<dbReference type="GO" id="GO:0008295">
    <property type="term" value="P:spermidine biosynthetic process"/>
    <property type="evidence" value="ECO:0007669"/>
    <property type="project" value="UniProtKB-UniRule"/>
</dbReference>
<dbReference type="Gene3D" id="3.60.90.10">
    <property type="entry name" value="S-adenosylmethionine decarboxylase"/>
    <property type="match status" value="1"/>
</dbReference>
<dbReference type="HAMAP" id="MF_00465">
    <property type="entry name" value="AdoMetDC_2"/>
    <property type="match status" value="1"/>
</dbReference>
<dbReference type="InterPro" id="IPR003826">
    <property type="entry name" value="AdoMetDC_fam_prok"/>
</dbReference>
<dbReference type="InterPro" id="IPR009165">
    <property type="entry name" value="S-AdoMet_deCO2ase_bac"/>
</dbReference>
<dbReference type="InterPro" id="IPR016067">
    <property type="entry name" value="S-AdoMet_deCO2ase_core"/>
</dbReference>
<dbReference type="NCBIfam" id="TIGR03331">
    <property type="entry name" value="SAM_DCase_Eco"/>
    <property type="match status" value="1"/>
</dbReference>
<dbReference type="PANTHER" id="PTHR33866">
    <property type="entry name" value="S-ADENOSYLMETHIONINE DECARBOXYLASE PROENZYME"/>
    <property type="match status" value="1"/>
</dbReference>
<dbReference type="PANTHER" id="PTHR33866:SF1">
    <property type="entry name" value="S-ADENOSYLMETHIONINE DECARBOXYLASE PROENZYME"/>
    <property type="match status" value="1"/>
</dbReference>
<dbReference type="Pfam" id="PF02675">
    <property type="entry name" value="AdoMet_dc"/>
    <property type="match status" value="1"/>
</dbReference>
<dbReference type="PIRSF" id="PIRSF001356">
    <property type="entry name" value="SAM_decarboxylas"/>
    <property type="match status" value="1"/>
</dbReference>
<dbReference type="SUPFAM" id="SSF56276">
    <property type="entry name" value="S-adenosylmethionine decarboxylase"/>
    <property type="match status" value="1"/>
</dbReference>